<accession>A1CDD4</accession>
<sequence length="1130" mass="124666">MPLRSSQSSPPASQSFKRKQPTISSFFTKKPPTSQEKAQEPEDEPAASRRQFANALDKATRVKEHGAPAERDEEQEEEEEDIVAPAPKRIKTNGVHEKEPASAAKEVSSASRPAPPLASSQRTELYKFASSPADGAGAGVDRPEDPETKQRQAERERLHQLFVKKLGGADCAVGIGRSAGGDAPSGAEEAAEGDEDEEVAPAPAAKGRGSKKAGGGKLTPLEKQVIEIKRKHMDTVLVIEVGYKYRFFGEDARIAAKELSIVCIPGKMRFDEHPSEAHLDRFASASIPVHRLHVHVKRLVAAGYKVGVVRQLETAALKAAGDNRNAPFSRKLTNLYTKGTYVDDVEGLEGPTPAASGGASPATGYLLCITETNAKGWGNDERVHVGIVAVQPNTGDIIYDDFEDGFMRSEVETRLLHIAPCELVIVGELSKATEKLVQHLSGSKLNTFGDKVRVERVGKKKTAVAESHSHVANFYASKLKAASVDDTQTSNLLQKVLTLPEQVTVCLSAMIEHMTEYGLEHIFQLTKYFQHFSSRSHMLLNANTLVSLEIYQNQTDHSTKGSLFWTLDRTQTRFGQRLLRKWVGRPLLDKSRLEERVNAVEELKNPEKTVQVERLKRLLGRIKSDLEKNLIRIYYGKCTRPELLTVLQTLQTIAQEYADVKSPEDNGFASPVLGEAVASLPTILKDVVAFLNKINMHAARSDDKYEFFRESEETDEISEHKLGIASVEHELEEHRAVAAGILKWPKVVYVTSSGIEYLIEVENTSNAIKRVPASWVKVSGTKKLSRFHTPEVIQLLRQRDQHKEALAAACDKAFAALLAEIAVNYQLFRDCVQALATLDCLLSLAAIASQPGYVKPEYTDHTCICVEQGRHPMVEQLLLDSYVPNDTDLDTDQTRALLVTGPNMGGKSSYVRQVALIAIMGQIGSYVPARSAKLGMLDAVFTRMGAFDNMLAGESTFMVELSETADILKQATPRSLVILDELGRGTSTHDGVAIAQAVLDYMVRTIRSLTLFITHYQHLSNMTQSFPDHELRNVHMRFTESGAGQDEEITFLYEVGEGVAHRSYGLNVARLANLPAPLLDVAKLKSAELEEQIRRRRLARLLTAVGEVMSDPAKGDEDFLERLMSTAEQL</sequence>
<name>MSH3_ASPCL</name>
<evidence type="ECO:0000250" key="1"/>
<evidence type="ECO:0000255" key="2"/>
<evidence type="ECO:0000256" key="3">
    <source>
        <dbReference type="SAM" id="MobiDB-lite"/>
    </source>
</evidence>
<evidence type="ECO:0000305" key="4"/>
<gene>
    <name type="primary">msh3</name>
    <name type="ORF">ACLA_006180</name>
</gene>
<feature type="chain" id="PRO_0000338508" description="DNA mismatch repair protein msh3">
    <location>
        <begin position="1"/>
        <end position="1130"/>
    </location>
</feature>
<feature type="region of interest" description="Disordered" evidence="3">
    <location>
        <begin position="1"/>
        <end position="153"/>
    </location>
</feature>
<feature type="region of interest" description="Disordered" evidence="3">
    <location>
        <begin position="177"/>
        <end position="217"/>
    </location>
</feature>
<feature type="region of interest" description="Mispair-binding domain" evidence="1">
    <location>
        <begin position="212"/>
        <end position="339"/>
    </location>
</feature>
<feature type="compositionally biased region" description="Low complexity" evidence="3">
    <location>
        <begin position="1"/>
        <end position="15"/>
    </location>
</feature>
<feature type="compositionally biased region" description="Polar residues" evidence="3">
    <location>
        <begin position="21"/>
        <end position="36"/>
    </location>
</feature>
<feature type="compositionally biased region" description="Basic and acidic residues" evidence="3">
    <location>
        <begin position="58"/>
        <end position="70"/>
    </location>
</feature>
<feature type="compositionally biased region" description="Acidic residues" evidence="3">
    <location>
        <begin position="71"/>
        <end position="82"/>
    </location>
</feature>
<feature type="compositionally biased region" description="Low complexity" evidence="3">
    <location>
        <begin position="108"/>
        <end position="120"/>
    </location>
</feature>
<feature type="compositionally biased region" description="Basic and acidic residues" evidence="3">
    <location>
        <begin position="141"/>
        <end position="153"/>
    </location>
</feature>
<feature type="compositionally biased region" description="Acidic residues" evidence="3">
    <location>
        <begin position="189"/>
        <end position="199"/>
    </location>
</feature>
<feature type="binding site" evidence="2">
    <location>
        <begin position="901"/>
        <end position="908"/>
    </location>
    <ligand>
        <name>ATP</name>
        <dbReference type="ChEBI" id="CHEBI:30616"/>
    </ligand>
</feature>
<keyword id="KW-0067">ATP-binding</keyword>
<keyword id="KW-0227">DNA damage</keyword>
<keyword id="KW-0234">DNA repair</keyword>
<keyword id="KW-0238">DNA-binding</keyword>
<keyword id="KW-0547">Nucleotide-binding</keyword>
<keyword id="KW-0539">Nucleus</keyword>
<keyword id="KW-1185">Reference proteome</keyword>
<dbReference type="EMBL" id="DS027051">
    <property type="protein sequence ID" value="EAW11861.1"/>
    <property type="molecule type" value="Genomic_DNA"/>
</dbReference>
<dbReference type="RefSeq" id="XP_001273287.1">
    <property type="nucleotide sequence ID" value="XM_001273286.1"/>
</dbReference>
<dbReference type="SMR" id="A1CDD4"/>
<dbReference type="STRING" id="344612.A1CDD4"/>
<dbReference type="EnsemblFungi" id="EAW11861">
    <property type="protein sequence ID" value="EAW11861"/>
    <property type="gene ID" value="ACLA_006180"/>
</dbReference>
<dbReference type="GeneID" id="4705676"/>
<dbReference type="KEGG" id="act:ACLA_006180"/>
<dbReference type="VEuPathDB" id="FungiDB:ACLA_006180"/>
<dbReference type="eggNOG" id="KOG0218">
    <property type="taxonomic scope" value="Eukaryota"/>
</dbReference>
<dbReference type="HOGENOM" id="CLU_002472_0_0_1"/>
<dbReference type="OMA" id="INMHAAR"/>
<dbReference type="OrthoDB" id="121051at2759"/>
<dbReference type="Proteomes" id="UP000006701">
    <property type="component" value="Unassembled WGS sequence"/>
</dbReference>
<dbReference type="GO" id="GO:0005634">
    <property type="term" value="C:nucleus"/>
    <property type="evidence" value="ECO:0007669"/>
    <property type="project" value="UniProtKB-SubCell"/>
</dbReference>
<dbReference type="GO" id="GO:0005524">
    <property type="term" value="F:ATP binding"/>
    <property type="evidence" value="ECO:0007669"/>
    <property type="project" value="UniProtKB-KW"/>
</dbReference>
<dbReference type="GO" id="GO:0140664">
    <property type="term" value="F:ATP-dependent DNA damage sensor activity"/>
    <property type="evidence" value="ECO:0007669"/>
    <property type="project" value="InterPro"/>
</dbReference>
<dbReference type="GO" id="GO:0030983">
    <property type="term" value="F:mismatched DNA binding"/>
    <property type="evidence" value="ECO:0007669"/>
    <property type="project" value="InterPro"/>
</dbReference>
<dbReference type="GO" id="GO:0006298">
    <property type="term" value="P:mismatch repair"/>
    <property type="evidence" value="ECO:0007669"/>
    <property type="project" value="InterPro"/>
</dbReference>
<dbReference type="GO" id="GO:0006312">
    <property type="term" value="P:mitotic recombination"/>
    <property type="evidence" value="ECO:0007669"/>
    <property type="project" value="TreeGrafter"/>
</dbReference>
<dbReference type="FunFam" id="3.30.420.110:FF:000008">
    <property type="entry name" value="DNA mismatch repair protein"/>
    <property type="match status" value="1"/>
</dbReference>
<dbReference type="FunFam" id="3.40.1170.10:FF:000006">
    <property type="entry name" value="DNA mismatch repair protein"/>
    <property type="match status" value="1"/>
</dbReference>
<dbReference type="FunFam" id="1.10.1420.10:FF:000004">
    <property type="entry name" value="DNA mismatch repair protein Msh3"/>
    <property type="match status" value="1"/>
</dbReference>
<dbReference type="FunFam" id="3.40.50.300:FF:001909">
    <property type="entry name" value="DNA mismatch repair protein msh3"/>
    <property type="match status" value="1"/>
</dbReference>
<dbReference type="Gene3D" id="1.10.1420.10">
    <property type="match status" value="2"/>
</dbReference>
<dbReference type="Gene3D" id="3.40.1170.10">
    <property type="entry name" value="DNA repair protein MutS, domain I"/>
    <property type="match status" value="1"/>
</dbReference>
<dbReference type="Gene3D" id="3.30.420.110">
    <property type="entry name" value="MutS, connector domain"/>
    <property type="match status" value="1"/>
</dbReference>
<dbReference type="Gene3D" id="3.40.50.300">
    <property type="entry name" value="P-loop containing nucleotide triphosphate hydrolases"/>
    <property type="match status" value="1"/>
</dbReference>
<dbReference type="InterPro" id="IPR007695">
    <property type="entry name" value="DNA_mismatch_repair_MutS-lik_N"/>
</dbReference>
<dbReference type="InterPro" id="IPR017261">
    <property type="entry name" value="DNA_mismatch_repair_MutS/MSH"/>
</dbReference>
<dbReference type="InterPro" id="IPR000432">
    <property type="entry name" value="DNA_mismatch_repair_MutS_C"/>
</dbReference>
<dbReference type="InterPro" id="IPR007696">
    <property type="entry name" value="DNA_mismatch_repair_MutS_core"/>
</dbReference>
<dbReference type="InterPro" id="IPR016151">
    <property type="entry name" value="DNA_mismatch_repair_MutS_N"/>
</dbReference>
<dbReference type="InterPro" id="IPR036187">
    <property type="entry name" value="DNA_mismatch_repair_MutS_sf"/>
</dbReference>
<dbReference type="InterPro" id="IPR007860">
    <property type="entry name" value="DNA_mmatch_repair_MutS_con_dom"/>
</dbReference>
<dbReference type="InterPro" id="IPR045076">
    <property type="entry name" value="MutS"/>
</dbReference>
<dbReference type="InterPro" id="IPR036678">
    <property type="entry name" value="MutS_con_dom_sf"/>
</dbReference>
<dbReference type="InterPro" id="IPR027417">
    <property type="entry name" value="P-loop_NTPase"/>
</dbReference>
<dbReference type="NCBIfam" id="NF003810">
    <property type="entry name" value="PRK05399.1"/>
    <property type="match status" value="1"/>
</dbReference>
<dbReference type="PANTHER" id="PTHR11361:SF122">
    <property type="entry name" value="DNA MISMATCH REPAIR PROTEIN MSH3"/>
    <property type="match status" value="1"/>
</dbReference>
<dbReference type="PANTHER" id="PTHR11361">
    <property type="entry name" value="DNA MISMATCH REPAIR PROTEIN MUTS FAMILY MEMBER"/>
    <property type="match status" value="1"/>
</dbReference>
<dbReference type="Pfam" id="PF01624">
    <property type="entry name" value="MutS_I"/>
    <property type="match status" value="1"/>
</dbReference>
<dbReference type="Pfam" id="PF05188">
    <property type="entry name" value="MutS_II"/>
    <property type="match status" value="1"/>
</dbReference>
<dbReference type="Pfam" id="PF05192">
    <property type="entry name" value="MutS_III"/>
    <property type="match status" value="1"/>
</dbReference>
<dbReference type="Pfam" id="PF00488">
    <property type="entry name" value="MutS_V"/>
    <property type="match status" value="1"/>
</dbReference>
<dbReference type="PIRSF" id="PIRSF037677">
    <property type="entry name" value="DNA_mis_repair_Msh6"/>
    <property type="match status" value="1"/>
</dbReference>
<dbReference type="SMART" id="SM00534">
    <property type="entry name" value="MUTSac"/>
    <property type="match status" value="1"/>
</dbReference>
<dbReference type="SMART" id="SM00533">
    <property type="entry name" value="MUTSd"/>
    <property type="match status" value="1"/>
</dbReference>
<dbReference type="SUPFAM" id="SSF55271">
    <property type="entry name" value="DNA repair protein MutS, domain I"/>
    <property type="match status" value="1"/>
</dbReference>
<dbReference type="SUPFAM" id="SSF48334">
    <property type="entry name" value="DNA repair protein MutS, domain III"/>
    <property type="match status" value="1"/>
</dbReference>
<dbReference type="SUPFAM" id="SSF52540">
    <property type="entry name" value="P-loop containing nucleoside triphosphate hydrolases"/>
    <property type="match status" value="1"/>
</dbReference>
<dbReference type="PROSITE" id="PS00486">
    <property type="entry name" value="DNA_MISMATCH_REPAIR_2"/>
    <property type="match status" value="1"/>
</dbReference>
<comment type="function">
    <text evidence="1">Component of the post-replicative DNA mismatch repair system (MMR). Heterodimerizes with msh2 to form MutS beta, which binds to DNA mismatches thereby initiating DNA repair. Msh3 provides substrate-binding and substrate specificity to the complex. When bound, the MutS beta heterodimer bends the DNA helix and shields approximately 20 base pairs. Acts mainly to repair insertion-deletion loops (IDLs) from 2 to 13 nucleotides in size, but can also repair base-base and single insertion-deletion mismatches that occur during replication. After mismatch binding, forms a ternary complex with the MutL alpha heterodimer, which is thought to be responsible for directing the downstream MMR events, including strand discrimination, excision, and resynthesis. ATP binding and hydrolysis play a pivotal role in mismatch repair functions (By similarity).</text>
</comment>
<comment type="subunit">
    <text evidence="1">Heterodimer consisting of msh2-msh3 (MutS beta). Forms a ternary complex with MutL alpha (mlh1-pms1) (By similarity).</text>
</comment>
<comment type="subcellular location">
    <subcellularLocation>
        <location evidence="1">Nucleus</location>
    </subcellularLocation>
</comment>
<comment type="similarity">
    <text evidence="4">Belongs to the DNA mismatch repair MutS family. MSH3 subfamily.</text>
</comment>
<proteinExistence type="inferred from homology"/>
<protein>
    <recommendedName>
        <fullName>DNA mismatch repair protein msh3</fullName>
    </recommendedName>
    <alternativeName>
        <fullName>MutS protein homolog 3</fullName>
    </alternativeName>
</protein>
<reference key="1">
    <citation type="journal article" date="2008" name="PLoS Genet.">
        <title>Genomic islands in the pathogenic filamentous fungus Aspergillus fumigatus.</title>
        <authorList>
            <person name="Fedorova N.D."/>
            <person name="Khaldi N."/>
            <person name="Joardar V.S."/>
            <person name="Maiti R."/>
            <person name="Amedeo P."/>
            <person name="Anderson M.J."/>
            <person name="Crabtree J."/>
            <person name="Silva J.C."/>
            <person name="Badger J.H."/>
            <person name="Albarraq A."/>
            <person name="Angiuoli S."/>
            <person name="Bussey H."/>
            <person name="Bowyer P."/>
            <person name="Cotty P.J."/>
            <person name="Dyer P.S."/>
            <person name="Egan A."/>
            <person name="Galens K."/>
            <person name="Fraser-Liggett C.M."/>
            <person name="Haas B.J."/>
            <person name="Inman J.M."/>
            <person name="Kent R."/>
            <person name="Lemieux S."/>
            <person name="Malavazi I."/>
            <person name="Orvis J."/>
            <person name="Roemer T."/>
            <person name="Ronning C.M."/>
            <person name="Sundaram J.P."/>
            <person name="Sutton G."/>
            <person name="Turner G."/>
            <person name="Venter J.C."/>
            <person name="White O.R."/>
            <person name="Whitty B.R."/>
            <person name="Youngman P."/>
            <person name="Wolfe K.H."/>
            <person name="Goldman G.H."/>
            <person name="Wortman J.R."/>
            <person name="Jiang B."/>
            <person name="Denning D.W."/>
            <person name="Nierman W.C."/>
        </authorList>
    </citation>
    <scope>NUCLEOTIDE SEQUENCE [LARGE SCALE GENOMIC DNA]</scope>
    <source>
        <strain>ATCC 1007 / CBS 513.65 / DSM 816 / NCTC 3887 / NRRL 1 / QM 1276 / 107</strain>
    </source>
</reference>
<organism>
    <name type="scientific">Aspergillus clavatus (strain ATCC 1007 / CBS 513.65 / DSM 816 / NCTC 3887 / NRRL 1 / QM 1276 / 107)</name>
    <dbReference type="NCBI Taxonomy" id="344612"/>
    <lineage>
        <taxon>Eukaryota</taxon>
        <taxon>Fungi</taxon>
        <taxon>Dikarya</taxon>
        <taxon>Ascomycota</taxon>
        <taxon>Pezizomycotina</taxon>
        <taxon>Eurotiomycetes</taxon>
        <taxon>Eurotiomycetidae</taxon>
        <taxon>Eurotiales</taxon>
        <taxon>Aspergillaceae</taxon>
        <taxon>Aspergillus</taxon>
        <taxon>Aspergillus subgen. Fumigati</taxon>
    </lineage>
</organism>